<gene>
    <name type="ordered locus">BT9727_3705</name>
</gene>
<accession>Q6HEK2</accession>
<protein>
    <recommendedName>
        <fullName evidence="1">UPF0637 protein BT9727_3705</fullName>
    </recommendedName>
</protein>
<sequence>MTLQTFKSTDFEVFTVDGLEERMSAIKTNIHPKLEALGEQFAAYLSKQTDENFFYHVAKHARRKVNPPNDTWVAFSTNKRGYKMLPHFQIGLWGTHAFIYFGLIYECPQKVETAHAFLEHLNDLKTNIPNDFVWSIDHTKPSVKLHKTLETEDLQKMIERLATVKKAELLVGIHISPEEFSAMTNEQFLAKIESTMQSLLPLYALCNR</sequence>
<dbReference type="EMBL" id="AE017355">
    <property type="protein sequence ID" value="AAT60676.1"/>
    <property type="molecule type" value="Genomic_DNA"/>
</dbReference>
<dbReference type="RefSeq" id="WP_000175083.1">
    <property type="nucleotide sequence ID" value="NC_005957.1"/>
</dbReference>
<dbReference type="RefSeq" id="YP_038024.1">
    <property type="nucleotide sequence ID" value="NC_005957.1"/>
</dbReference>
<dbReference type="SMR" id="Q6HEK2"/>
<dbReference type="KEGG" id="btk:BT9727_3705"/>
<dbReference type="PATRIC" id="fig|281309.8.peg.3943"/>
<dbReference type="HOGENOM" id="CLU_096059_0_0_9"/>
<dbReference type="Proteomes" id="UP000001301">
    <property type="component" value="Chromosome"/>
</dbReference>
<dbReference type="Gene3D" id="3.30.930.20">
    <property type="entry name" value="Protein of unknown function DUF1054"/>
    <property type="match status" value="1"/>
</dbReference>
<dbReference type="HAMAP" id="MF_01851">
    <property type="entry name" value="UPF0637"/>
    <property type="match status" value="1"/>
</dbReference>
<dbReference type="InterPro" id="IPR009403">
    <property type="entry name" value="UPF0637"/>
</dbReference>
<dbReference type="InterPro" id="IPR053707">
    <property type="entry name" value="UPF0637_domain_sf"/>
</dbReference>
<dbReference type="Pfam" id="PF06335">
    <property type="entry name" value="DUF1054"/>
    <property type="match status" value="1"/>
</dbReference>
<dbReference type="PIRSF" id="PIRSF021332">
    <property type="entry name" value="DUF1054"/>
    <property type="match status" value="1"/>
</dbReference>
<dbReference type="SUPFAM" id="SSF142913">
    <property type="entry name" value="YktB/PF0168-like"/>
    <property type="match status" value="1"/>
</dbReference>
<organism>
    <name type="scientific">Bacillus thuringiensis subsp. konkukian (strain 97-27)</name>
    <dbReference type="NCBI Taxonomy" id="281309"/>
    <lineage>
        <taxon>Bacteria</taxon>
        <taxon>Bacillati</taxon>
        <taxon>Bacillota</taxon>
        <taxon>Bacilli</taxon>
        <taxon>Bacillales</taxon>
        <taxon>Bacillaceae</taxon>
        <taxon>Bacillus</taxon>
        <taxon>Bacillus cereus group</taxon>
    </lineage>
</organism>
<evidence type="ECO:0000255" key="1">
    <source>
        <dbReference type="HAMAP-Rule" id="MF_01851"/>
    </source>
</evidence>
<reference key="1">
    <citation type="journal article" date="2006" name="J. Bacteriol.">
        <title>Pathogenomic sequence analysis of Bacillus cereus and Bacillus thuringiensis isolates closely related to Bacillus anthracis.</title>
        <authorList>
            <person name="Han C.S."/>
            <person name="Xie G."/>
            <person name="Challacombe J.F."/>
            <person name="Altherr M.R."/>
            <person name="Bhotika S.S."/>
            <person name="Bruce D."/>
            <person name="Campbell C.S."/>
            <person name="Campbell M.L."/>
            <person name="Chen J."/>
            <person name="Chertkov O."/>
            <person name="Cleland C."/>
            <person name="Dimitrijevic M."/>
            <person name="Doggett N.A."/>
            <person name="Fawcett J.J."/>
            <person name="Glavina T."/>
            <person name="Goodwin L.A."/>
            <person name="Hill K.K."/>
            <person name="Hitchcock P."/>
            <person name="Jackson P.J."/>
            <person name="Keim P."/>
            <person name="Kewalramani A.R."/>
            <person name="Longmire J."/>
            <person name="Lucas S."/>
            <person name="Malfatti S."/>
            <person name="McMurry K."/>
            <person name="Meincke L.J."/>
            <person name="Misra M."/>
            <person name="Moseman B.L."/>
            <person name="Mundt M."/>
            <person name="Munk A.C."/>
            <person name="Okinaka R.T."/>
            <person name="Parson-Quintana B."/>
            <person name="Reilly L.P."/>
            <person name="Richardson P."/>
            <person name="Robinson D.L."/>
            <person name="Rubin E."/>
            <person name="Saunders E."/>
            <person name="Tapia R."/>
            <person name="Tesmer J.G."/>
            <person name="Thayer N."/>
            <person name="Thompson L.S."/>
            <person name="Tice H."/>
            <person name="Ticknor L.O."/>
            <person name="Wills P.L."/>
            <person name="Brettin T.S."/>
            <person name="Gilna P."/>
        </authorList>
    </citation>
    <scope>NUCLEOTIDE SEQUENCE [LARGE SCALE GENOMIC DNA]</scope>
    <source>
        <strain>97-27</strain>
    </source>
</reference>
<feature type="chain" id="PRO_0000348300" description="UPF0637 protein BT9727_3705">
    <location>
        <begin position="1"/>
        <end position="208"/>
    </location>
</feature>
<proteinExistence type="inferred from homology"/>
<comment type="similarity">
    <text evidence="1">Belongs to the UPF0637 family.</text>
</comment>
<name>Y3705_BACHK</name>